<proteinExistence type="evidence at transcript level"/>
<gene>
    <name type="primary">UTS2R</name>
    <name type="synonym">GPR14</name>
</gene>
<dbReference type="EMBL" id="BT021614">
    <property type="protein sequence ID" value="AAX46461.1"/>
    <property type="molecule type" value="mRNA"/>
</dbReference>
<dbReference type="EMBL" id="U23459">
    <property type="protein sequence ID" value="AAC48464.1"/>
    <property type="molecule type" value="mRNA"/>
</dbReference>
<dbReference type="RefSeq" id="NP_001035574.1">
    <property type="nucleotide sequence ID" value="NM_001040484.1"/>
</dbReference>
<dbReference type="SMR" id="P49220"/>
<dbReference type="FunCoup" id="P49220">
    <property type="interactions" value="258"/>
</dbReference>
<dbReference type="GlyCosmos" id="P49220">
    <property type="glycosylation" value="2 sites, No reported glycans"/>
</dbReference>
<dbReference type="GlyGen" id="P49220">
    <property type="glycosylation" value="2 sites"/>
</dbReference>
<dbReference type="PaxDb" id="9913-ENSBTAP00000024179"/>
<dbReference type="GeneID" id="286969"/>
<dbReference type="KEGG" id="bta:286969"/>
<dbReference type="CTD" id="2837"/>
<dbReference type="eggNOG" id="KOG3656">
    <property type="taxonomic scope" value="Eukaryota"/>
</dbReference>
<dbReference type="InParanoid" id="P49220"/>
<dbReference type="OrthoDB" id="6076970at2759"/>
<dbReference type="Proteomes" id="UP000009136">
    <property type="component" value="Unplaced"/>
</dbReference>
<dbReference type="GO" id="GO:0005886">
    <property type="term" value="C:plasma membrane"/>
    <property type="evidence" value="ECO:0000318"/>
    <property type="project" value="GO_Central"/>
</dbReference>
<dbReference type="GO" id="GO:0001604">
    <property type="term" value="F:urotensin II receptor activity"/>
    <property type="evidence" value="ECO:0000318"/>
    <property type="project" value="GO_Central"/>
</dbReference>
<dbReference type="GO" id="GO:0097746">
    <property type="term" value="P:blood vessel diameter maintenance"/>
    <property type="evidence" value="ECO:0007669"/>
    <property type="project" value="InterPro"/>
</dbReference>
<dbReference type="GO" id="GO:0007218">
    <property type="term" value="P:neuropeptide signaling pathway"/>
    <property type="evidence" value="ECO:0000318"/>
    <property type="project" value="GO_Central"/>
</dbReference>
<dbReference type="GO" id="GO:0008217">
    <property type="term" value="P:regulation of blood pressure"/>
    <property type="evidence" value="ECO:0007669"/>
    <property type="project" value="InterPro"/>
</dbReference>
<dbReference type="CDD" id="cd14999">
    <property type="entry name" value="7tmA_UII-R"/>
    <property type="match status" value="1"/>
</dbReference>
<dbReference type="FunFam" id="1.20.1070.10:FF:000183">
    <property type="entry name" value="Urotensin-2 receptor"/>
    <property type="match status" value="1"/>
</dbReference>
<dbReference type="Gene3D" id="1.20.1070.10">
    <property type="entry name" value="Rhodopsin 7-helix transmembrane proteins"/>
    <property type="match status" value="1"/>
</dbReference>
<dbReference type="InterPro" id="IPR000276">
    <property type="entry name" value="GPCR_Rhodpsn"/>
</dbReference>
<dbReference type="InterPro" id="IPR017452">
    <property type="entry name" value="GPCR_Rhodpsn_7TM"/>
</dbReference>
<dbReference type="InterPro" id="IPR000670">
    <property type="entry name" value="Urot_II_rcpt"/>
</dbReference>
<dbReference type="PANTHER" id="PTHR24230">
    <property type="entry name" value="G-PROTEIN COUPLED RECEPTOR"/>
    <property type="match status" value="1"/>
</dbReference>
<dbReference type="PANTHER" id="PTHR24230:SF60">
    <property type="entry name" value="UROTENSIN-2 RECEPTOR"/>
    <property type="match status" value="1"/>
</dbReference>
<dbReference type="Pfam" id="PF00001">
    <property type="entry name" value="7tm_1"/>
    <property type="match status" value="1"/>
</dbReference>
<dbReference type="PRINTS" id="PR00237">
    <property type="entry name" value="GPCRRHODOPSN"/>
</dbReference>
<dbReference type="PRINTS" id="PR00647">
    <property type="entry name" value="UROTENSIN2R"/>
</dbReference>
<dbReference type="SUPFAM" id="SSF81321">
    <property type="entry name" value="Family A G protein-coupled receptor-like"/>
    <property type="match status" value="1"/>
</dbReference>
<dbReference type="PROSITE" id="PS50262">
    <property type="entry name" value="G_PROTEIN_RECEP_F1_2"/>
    <property type="match status" value="1"/>
</dbReference>
<keyword id="KW-1003">Cell membrane</keyword>
<keyword id="KW-1015">Disulfide bond</keyword>
<keyword id="KW-0297">G-protein coupled receptor</keyword>
<keyword id="KW-0325">Glycoprotein</keyword>
<keyword id="KW-0472">Membrane</keyword>
<keyword id="KW-0675">Receptor</keyword>
<keyword id="KW-1185">Reference proteome</keyword>
<keyword id="KW-0807">Transducer</keyword>
<keyword id="KW-0812">Transmembrane</keyword>
<keyword id="KW-1133">Transmembrane helix</keyword>
<sequence length="384" mass="42316">MALSPEPSSRFLVPATMGSAMPELPGAPNASLNSSLASPTEPNSLEDLVATGTIGVVLSAMGVVGMAGNVYTLTVMCRFLHTSASMYVYVINLALADLLYLLSIPFIVATYVTKRWHFGDVGCRVLFSLDFLTMHASIFTLTLMSRERYAAVVRPLDTVQRSKGYRKVLALGTWLLALLLALPMMLAIRLVRRGHKSLCLPAWGQRTHRAYLTLLFGTSIVGPGVVIGLLYVRLARAYWLSQRSSFTQTRRLPNPRVLYLILGIVLLFWACFLPFWLWQLLAQYRGAPPLAPRSARIVNYLTTCLTYGNSCVNPFLYTLLTKNYRDYRQRSLHSRGTSGPVGVRSFPQGHTRCQLGSGRSVTSSSQQATETIALSQAVPGSLCV</sequence>
<reference key="1">
    <citation type="journal article" date="2005" name="BMC Genomics">
        <title>Characterization of 954 bovine full-CDS cDNA sequences.</title>
        <authorList>
            <person name="Harhay G.P."/>
            <person name="Sonstegard T.S."/>
            <person name="Keele J.W."/>
            <person name="Heaton M.P."/>
            <person name="Clawson M.L."/>
            <person name="Snelling W.M."/>
            <person name="Wiedmann R.T."/>
            <person name="Van Tassell C.P."/>
            <person name="Smith T.P.L."/>
        </authorList>
    </citation>
    <scope>NUCLEOTIDE SEQUENCE [LARGE SCALE MRNA]</scope>
</reference>
<reference key="2">
    <citation type="journal article" date="1995" name="Biochem. Biophys. Res. Commun.">
        <title>A novel putative neuropeptide receptor expressed in neural tissue, including sensory epithelia.</title>
        <authorList>
            <person name="Tal M."/>
            <person name="Ammar D.A."/>
            <person name="Karpuj M."/>
            <person name="Krizhanovsky V."/>
            <person name="Naim M."/>
            <person name="Thompson D.A."/>
        </authorList>
    </citation>
    <scope>NUCLEOTIDE SEQUENCE [MRNA] OF 98-312</scope>
    <source>
        <tissue>Retina</tissue>
    </source>
</reference>
<accession>P49220</accession>
<accession>Q58DI3</accession>
<organism>
    <name type="scientific">Bos taurus</name>
    <name type="common">Bovine</name>
    <dbReference type="NCBI Taxonomy" id="9913"/>
    <lineage>
        <taxon>Eukaryota</taxon>
        <taxon>Metazoa</taxon>
        <taxon>Chordata</taxon>
        <taxon>Craniata</taxon>
        <taxon>Vertebrata</taxon>
        <taxon>Euteleostomi</taxon>
        <taxon>Mammalia</taxon>
        <taxon>Eutheria</taxon>
        <taxon>Laurasiatheria</taxon>
        <taxon>Artiodactyla</taxon>
        <taxon>Ruminantia</taxon>
        <taxon>Pecora</taxon>
        <taxon>Bovidae</taxon>
        <taxon>Bovinae</taxon>
        <taxon>Bos</taxon>
    </lineage>
</organism>
<comment type="function">
    <text evidence="1">High affinity receptor for urotensin-2 and urotensin-2B. The activity of this receptor is mediated by a G-protein that activate a phosphatidylinositol-calcium second messenger system (By similarity).</text>
</comment>
<comment type="subcellular location">
    <subcellularLocation>
        <location>Cell membrane</location>
        <topology>Multi-pass membrane protein</topology>
    </subcellularLocation>
</comment>
<comment type="tissue specificity">
    <text>Expressed in neural tissue, including sensory epithelia.</text>
</comment>
<comment type="similarity">
    <text evidence="3">Belongs to the G-protein coupled receptor 1 family.</text>
</comment>
<name>UR2R_BOVIN</name>
<feature type="chain" id="PRO_0000070192" description="Urotensin-2 receptor">
    <location>
        <begin position="1"/>
        <end position="384"/>
    </location>
</feature>
<feature type="topological domain" description="Extracellular" evidence="2">
    <location>
        <begin position="1"/>
        <end position="54"/>
    </location>
</feature>
<feature type="transmembrane region" description="Helical; Name=1" evidence="2">
    <location>
        <begin position="55"/>
        <end position="77"/>
    </location>
</feature>
<feature type="topological domain" description="Cytoplasmic" evidence="2">
    <location>
        <begin position="78"/>
        <end position="87"/>
    </location>
</feature>
<feature type="transmembrane region" description="Helical; Name=2" evidence="2">
    <location>
        <begin position="88"/>
        <end position="113"/>
    </location>
</feature>
<feature type="topological domain" description="Extracellular" evidence="2">
    <location>
        <begin position="114"/>
        <end position="124"/>
    </location>
</feature>
<feature type="transmembrane region" description="Helical; Name=3" evidence="2">
    <location>
        <begin position="125"/>
        <end position="146"/>
    </location>
</feature>
<feature type="topological domain" description="Cytoplasmic" evidence="2">
    <location>
        <begin position="147"/>
        <end position="167"/>
    </location>
</feature>
<feature type="transmembrane region" description="Helical; Name=4" evidence="2">
    <location>
        <begin position="168"/>
        <end position="186"/>
    </location>
</feature>
<feature type="topological domain" description="Extracellular" evidence="2">
    <location>
        <begin position="187"/>
        <end position="209"/>
    </location>
</feature>
<feature type="transmembrane region" description="Helical; Name=5" evidence="2">
    <location>
        <begin position="210"/>
        <end position="232"/>
    </location>
</feature>
<feature type="topological domain" description="Cytoplasmic" evidence="2">
    <location>
        <begin position="233"/>
        <end position="259"/>
    </location>
</feature>
<feature type="transmembrane region" description="Helical; Name=6" evidence="2">
    <location>
        <begin position="260"/>
        <end position="285"/>
    </location>
</feature>
<feature type="topological domain" description="Extracellular" evidence="2">
    <location>
        <begin position="286"/>
        <end position="299"/>
    </location>
</feature>
<feature type="transmembrane region" description="Helical; Name=7" evidence="2">
    <location>
        <begin position="300"/>
        <end position="320"/>
    </location>
</feature>
<feature type="topological domain" description="Cytoplasmic" evidence="2">
    <location>
        <begin position="321"/>
        <end position="384"/>
    </location>
</feature>
<feature type="glycosylation site" description="N-linked (GlcNAc...) asparagine" evidence="2">
    <location>
        <position position="29"/>
    </location>
</feature>
<feature type="glycosylation site" description="N-linked (GlcNAc...) asparagine" evidence="2">
    <location>
        <position position="33"/>
    </location>
</feature>
<feature type="disulfide bond" evidence="3">
    <location>
        <begin position="123"/>
        <end position="199"/>
    </location>
</feature>
<feature type="sequence conflict" description="In Ref. 2; AAC48464." evidence="4" ref="2">
    <original>S</original>
    <variation>A</variation>
    <location>
        <position position="244"/>
    </location>
</feature>
<evidence type="ECO:0000250" key="1"/>
<evidence type="ECO:0000255" key="2"/>
<evidence type="ECO:0000255" key="3">
    <source>
        <dbReference type="PROSITE-ProRule" id="PRU00521"/>
    </source>
</evidence>
<evidence type="ECO:0000305" key="4"/>
<protein>
    <recommendedName>
        <fullName>Urotensin-2 receptor</fullName>
        <shortName>UR-2-R</shortName>
    </recommendedName>
    <alternativeName>
        <fullName>G-protein coupled receptor 14</fullName>
    </alternativeName>
    <alternativeName>
        <fullName>G-protein coupled sensory epithelial neuropeptide-like receptor</fullName>
        <shortName>SENR</shortName>
    </alternativeName>
    <alternativeName>
        <fullName>Urotensin II receptor</fullName>
        <shortName>UR-II-R</shortName>
    </alternativeName>
</protein>